<organism>
    <name type="scientific">Arabidopsis thaliana</name>
    <name type="common">Mouse-ear cress</name>
    <dbReference type="NCBI Taxonomy" id="3702"/>
    <lineage>
        <taxon>Eukaryota</taxon>
        <taxon>Viridiplantae</taxon>
        <taxon>Streptophyta</taxon>
        <taxon>Embryophyta</taxon>
        <taxon>Tracheophyta</taxon>
        <taxon>Spermatophyta</taxon>
        <taxon>Magnoliopsida</taxon>
        <taxon>eudicotyledons</taxon>
        <taxon>Gunneridae</taxon>
        <taxon>Pentapetalae</taxon>
        <taxon>rosids</taxon>
        <taxon>malvids</taxon>
        <taxon>Brassicales</taxon>
        <taxon>Brassicaceae</taxon>
        <taxon>Camelineae</taxon>
        <taxon>Arabidopsis</taxon>
    </lineage>
</organism>
<gene>
    <name type="primary">CYCT1-5</name>
    <name type="ordered locus">At5g45190</name>
    <name type="ORF">K18C1.7</name>
</gene>
<sequence>MAGVLAGECSYSESGVSSHSRNSHEKQEEVSRWYFGRKEIEENSPSRLDGIDLKKETYLRKSYCTFLQDLGMRLKVPQVTIATAIIFCHRFFFRQSHAKNDRRTIATVCMFLAGKVEETPRPLKDVIFVSYEIINKKDPGASQKIKQKEVYEQQKELILNGEKIVLSTLGFDLNVYHPYKPLVEAIKKFKVAQNALAQVAWNFVNDGLRTSLCLQFKPHHIAAGAIFLAAKFLKVKLPSDGEKVWWQEFDVTPRQLEDVSNQMLELYEQNRVPASQGSEVESSVGGGSAQRPGSRNAVSTDEHVGSRQTSSVRSTHEQSNSDNHGGSSKGVLNQNNENGGGEAANVSVDNKEEIERETKESSLHLESHPAHKDNVREAPHNSRPLVEGPGKDNSEREGGELQDDGAVHKSRNVDVGDALISQSPKDLKLLRDKVKAKREKAKKLLGERTRKKDLMDEDDLIERELEDVQLAVEDEKTKERKVQSRPKAENSDLMGTEHGEILDVKGEVKNTEEGEMVNNNVSPMMHSRKRKMGSPPEKQSEGKRRHNSENGEESHKTSRGSSHHGDREHRRHSQENNHS</sequence>
<keyword id="KW-0025">Alternative splicing</keyword>
<keyword id="KW-0131">Cell cycle</keyword>
<keyword id="KW-0132">Cell division</keyword>
<keyword id="KW-0195">Cyclin</keyword>
<keyword id="KW-0597">Phosphoprotein</keyword>
<keyword id="KW-1185">Reference proteome</keyword>
<reference key="1">
    <citation type="journal article" date="1998" name="DNA Res.">
        <title>Structural analysis of Arabidopsis thaliana chromosome 5. VI. Sequence features of the regions of 1,367,185 bp covered by 19 physically assigned P1 and TAC clones.</title>
        <authorList>
            <person name="Kotani H."/>
            <person name="Nakamura Y."/>
            <person name="Sato S."/>
            <person name="Asamizu E."/>
            <person name="Kaneko T."/>
            <person name="Miyajima N."/>
            <person name="Tabata S."/>
        </authorList>
    </citation>
    <scope>NUCLEOTIDE SEQUENCE [LARGE SCALE GENOMIC DNA]</scope>
    <source>
        <strain>cv. Columbia</strain>
    </source>
</reference>
<reference key="2">
    <citation type="journal article" date="2017" name="Plant J.">
        <title>Araport11: a complete reannotation of the Arabidopsis thaliana reference genome.</title>
        <authorList>
            <person name="Cheng C.Y."/>
            <person name="Krishnakumar V."/>
            <person name="Chan A.P."/>
            <person name="Thibaud-Nissen F."/>
            <person name="Schobel S."/>
            <person name="Town C.D."/>
        </authorList>
    </citation>
    <scope>GENOME REANNOTATION</scope>
    <source>
        <strain>cv. Columbia</strain>
    </source>
</reference>
<reference key="3">
    <citation type="submission" date="2006-07" db="EMBL/GenBank/DDBJ databases">
        <title>Large-scale analysis of RIKEN Arabidopsis full-length (RAFL) cDNAs.</title>
        <authorList>
            <person name="Totoki Y."/>
            <person name="Seki M."/>
            <person name="Ishida J."/>
            <person name="Nakajima M."/>
            <person name="Enju A."/>
            <person name="Kamiya A."/>
            <person name="Narusaka M."/>
            <person name="Shin-i T."/>
            <person name="Nakagawa M."/>
            <person name="Sakamoto N."/>
            <person name="Oishi K."/>
            <person name="Kohara Y."/>
            <person name="Kobayashi M."/>
            <person name="Toyoda A."/>
            <person name="Sakaki Y."/>
            <person name="Sakurai T."/>
            <person name="Iida K."/>
            <person name="Akiyama K."/>
            <person name="Satou M."/>
            <person name="Toyoda T."/>
            <person name="Konagaya A."/>
            <person name="Carninci P."/>
            <person name="Kawai J."/>
            <person name="Hayashizaki Y."/>
            <person name="Shinozaki K."/>
        </authorList>
    </citation>
    <scope>NUCLEOTIDE SEQUENCE [LARGE SCALE MRNA]</scope>
    <source>
        <strain>cv. Columbia</strain>
    </source>
</reference>
<reference key="4">
    <citation type="journal article" date="2004" name="Plant Physiol.">
        <title>Genome-wide analysis of the cyclin family in Arabidopsis and comparative phylogenetic analysis of plant cyclin-like proteins.</title>
        <authorList>
            <person name="Wang G."/>
            <person name="Kong H."/>
            <person name="Sun Y."/>
            <person name="Zhang X."/>
            <person name="Zhang W."/>
            <person name="Altman N."/>
            <person name="dePamphilis C.W."/>
            <person name="Ma H."/>
        </authorList>
    </citation>
    <scope>GENE FAMILY</scope>
    <scope>NOMENCLATURE</scope>
</reference>
<reference key="5">
    <citation type="journal article" date="2009" name="J. Proteomics">
        <title>Phosphoproteomic analysis of nuclei-enriched fractions from Arabidopsis thaliana.</title>
        <authorList>
            <person name="Jones A.M.E."/>
            <person name="MacLean D."/>
            <person name="Studholme D.J."/>
            <person name="Serna-Sanz A."/>
            <person name="Andreasson E."/>
            <person name="Rathjen J.P."/>
            <person name="Peck S.C."/>
        </authorList>
    </citation>
    <scope>IDENTIFICATION BY MASS SPECTROMETRY [LARGE SCALE ANALYSIS]</scope>
    <source>
        <strain>cv. Columbia</strain>
    </source>
</reference>
<reference key="6">
    <citation type="journal article" date="2009" name="Plant Physiol.">
        <title>Large-scale Arabidopsis phosphoproteome profiling reveals novel chloroplast kinase substrates and phosphorylation networks.</title>
        <authorList>
            <person name="Reiland S."/>
            <person name="Messerli G."/>
            <person name="Baerenfaller K."/>
            <person name="Gerrits B."/>
            <person name="Endler A."/>
            <person name="Grossmann J."/>
            <person name="Gruissem W."/>
            <person name="Baginsky S."/>
        </authorList>
    </citation>
    <scope>IDENTIFICATION BY MASS SPECTROMETRY [LARGE SCALE ANALYSIS]</scope>
</reference>
<protein>
    <recommendedName>
        <fullName>Cyclin-T1-5</fullName>
        <shortName>CycT1;5</shortName>
    </recommendedName>
    <alternativeName>
        <fullName>Protein AtCycT-like1</fullName>
    </alternativeName>
</protein>
<comment type="alternative products">
    <event type="alternative splicing"/>
    <isoform>
        <id>Q9FKE6-1</id>
        <name>1</name>
        <sequence type="displayed"/>
    </isoform>
    <text>A number of isoforms are produced. According to EST sequences.</text>
</comment>
<comment type="similarity">
    <text evidence="3">Belongs to the cyclin family. Cyclin T subfamily.</text>
</comment>
<comment type="sequence caution" evidence="3">
    <conflict type="erroneous termination">
        <sequence resource="EMBL" id="AK227273"/>
    </conflict>
    <text>Truncated C-terminus.</text>
</comment>
<comment type="sequence caution" evidence="3">
    <conflict type="erroneous gene model prediction">
        <sequence resource="EMBL-CDS" id="BAB11392"/>
    </conflict>
</comment>
<evidence type="ECO:0000250" key="1">
    <source>
        <dbReference type="UniProtKB" id="Q8GYM6"/>
    </source>
</evidence>
<evidence type="ECO:0000256" key="2">
    <source>
        <dbReference type="SAM" id="MobiDB-lite"/>
    </source>
</evidence>
<evidence type="ECO:0000305" key="3"/>
<proteinExistence type="evidence at protein level"/>
<accession>Q9FKE6</accession>
<feature type="chain" id="PRO_0000287057" description="Cyclin-T1-5">
    <location>
        <begin position="1"/>
        <end position="579"/>
    </location>
</feature>
<feature type="region of interest" description="Disordered" evidence="2">
    <location>
        <begin position="1"/>
        <end position="27"/>
    </location>
</feature>
<feature type="region of interest" description="Disordered" evidence="2">
    <location>
        <begin position="271"/>
        <end position="419"/>
    </location>
</feature>
<feature type="region of interest" description="Disordered" evidence="2">
    <location>
        <begin position="474"/>
        <end position="579"/>
    </location>
</feature>
<feature type="compositionally biased region" description="Polar residues" evidence="2">
    <location>
        <begin position="11"/>
        <end position="20"/>
    </location>
</feature>
<feature type="compositionally biased region" description="Low complexity" evidence="2">
    <location>
        <begin position="274"/>
        <end position="283"/>
    </location>
</feature>
<feature type="compositionally biased region" description="Polar residues" evidence="2">
    <location>
        <begin position="306"/>
        <end position="334"/>
    </location>
</feature>
<feature type="compositionally biased region" description="Basic and acidic residues" evidence="2">
    <location>
        <begin position="349"/>
        <end position="380"/>
    </location>
</feature>
<feature type="compositionally biased region" description="Basic and acidic residues" evidence="2">
    <location>
        <begin position="389"/>
        <end position="414"/>
    </location>
</feature>
<feature type="compositionally biased region" description="Basic and acidic residues" evidence="2">
    <location>
        <begin position="474"/>
        <end position="512"/>
    </location>
</feature>
<feature type="compositionally biased region" description="Basic and acidic residues" evidence="2">
    <location>
        <begin position="538"/>
        <end position="556"/>
    </location>
</feature>
<feature type="compositionally biased region" description="Basic and acidic residues" evidence="2">
    <location>
        <begin position="563"/>
        <end position="579"/>
    </location>
</feature>
<feature type="modified residue" description="Phosphoserine" evidence="1">
    <location>
        <position position="423"/>
    </location>
</feature>
<dbReference type="EMBL" id="AB012240">
    <property type="protein sequence ID" value="BAB11392.1"/>
    <property type="status" value="ALT_SEQ"/>
    <property type="molecule type" value="Genomic_DNA"/>
</dbReference>
<dbReference type="EMBL" id="CP002688">
    <property type="protein sequence ID" value="AED95214.1"/>
    <property type="molecule type" value="Genomic_DNA"/>
</dbReference>
<dbReference type="EMBL" id="AK227273">
    <property type="status" value="NOT_ANNOTATED_CDS"/>
    <property type="molecule type" value="mRNA"/>
</dbReference>
<dbReference type="RefSeq" id="NP_199332.2">
    <molecule id="Q9FKE6-1"/>
    <property type="nucleotide sequence ID" value="NM_123887.4"/>
</dbReference>
<dbReference type="SMR" id="Q9FKE6"/>
<dbReference type="BioGRID" id="19804">
    <property type="interactions" value="3"/>
</dbReference>
<dbReference type="FunCoup" id="Q9FKE6">
    <property type="interactions" value="3302"/>
</dbReference>
<dbReference type="STRING" id="3702.Q9FKE6"/>
<dbReference type="iPTMnet" id="Q9FKE6"/>
<dbReference type="PaxDb" id="3702-AT5G45190.2"/>
<dbReference type="EnsemblPlants" id="AT5G45190.1">
    <molecule id="Q9FKE6-1"/>
    <property type="protein sequence ID" value="AT5G45190.1"/>
    <property type="gene ID" value="AT5G45190"/>
</dbReference>
<dbReference type="GeneID" id="834555"/>
<dbReference type="Gramene" id="AT5G45190.1">
    <molecule id="Q9FKE6-1"/>
    <property type="protein sequence ID" value="AT5G45190.1"/>
    <property type="gene ID" value="AT5G45190"/>
</dbReference>
<dbReference type="KEGG" id="ath:AT5G45190"/>
<dbReference type="Araport" id="AT5G45190"/>
<dbReference type="TAIR" id="AT5G45190"/>
<dbReference type="eggNOG" id="KOG0834">
    <property type="taxonomic scope" value="Eukaryota"/>
</dbReference>
<dbReference type="HOGENOM" id="CLU_022000_8_1_1"/>
<dbReference type="InParanoid" id="Q9FKE6"/>
<dbReference type="PhylomeDB" id="Q9FKE6"/>
<dbReference type="PRO" id="PR:Q9FKE6"/>
<dbReference type="Proteomes" id="UP000006548">
    <property type="component" value="Chromosome 5"/>
</dbReference>
<dbReference type="ExpressionAtlas" id="Q9FKE6">
    <property type="expression patterns" value="baseline and differential"/>
</dbReference>
<dbReference type="GO" id="GO:0016538">
    <property type="term" value="F:cyclin-dependent protein serine/threonine kinase regulator activity"/>
    <property type="evidence" value="ECO:0007669"/>
    <property type="project" value="InterPro"/>
</dbReference>
<dbReference type="GO" id="GO:0051301">
    <property type="term" value="P:cell division"/>
    <property type="evidence" value="ECO:0007669"/>
    <property type="project" value="UniProtKB-KW"/>
</dbReference>
<dbReference type="GO" id="GO:0006357">
    <property type="term" value="P:regulation of transcription by RNA polymerase II"/>
    <property type="evidence" value="ECO:0007669"/>
    <property type="project" value="InterPro"/>
</dbReference>
<dbReference type="CDD" id="cd20587">
    <property type="entry name" value="CYCLIN_AcCycT_rpt1"/>
    <property type="match status" value="1"/>
</dbReference>
<dbReference type="CDD" id="cd20588">
    <property type="entry name" value="CYCLIN_AcCycT_rpt2"/>
    <property type="match status" value="1"/>
</dbReference>
<dbReference type="FunFam" id="1.10.472.10:FF:000026">
    <property type="entry name" value="Cyclin-T1-5 like"/>
    <property type="match status" value="1"/>
</dbReference>
<dbReference type="FunFam" id="1.10.472.10:FF:000028">
    <property type="entry name" value="Cyclin-T1-5 like"/>
    <property type="match status" value="1"/>
</dbReference>
<dbReference type="Gene3D" id="1.10.472.10">
    <property type="entry name" value="Cyclin-like"/>
    <property type="match status" value="2"/>
</dbReference>
<dbReference type="InterPro" id="IPR013763">
    <property type="entry name" value="Cyclin-like_dom"/>
</dbReference>
<dbReference type="InterPro" id="IPR036915">
    <property type="entry name" value="Cyclin-like_sf"/>
</dbReference>
<dbReference type="InterPro" id="IPR043198">
    <property type="entry name" value="Cyclin/Ssn8"/>
</dbReference>
<dbReference type="InterPro" id="IPR006671">
    <property type="entry name" value="Cyclin_N"/>
</dbReference>
<dbReference type="PANTHER" id="PTHR10026">
    <property type="entry name" value="CYCLIN"/>
    <property type="match status" value="1"/>
</dbReference>
<dbReference type="Pfam" id="PF00134">
    <property type="entry name" value="Cyclin_N"/>
    <property type="match status" value="1"/>
</dbReference>
<dbReference type="Pfam" id="PF21797">
    <property type="entry name" value="CycT2-like_C"/>
    <property type="match status" value="1"/>
</dbReference>
<dbReference type="SMART" id="SM00385">
    <property type="entry name" value="CYCLIN"/>
    <property type="match status" value="2"/>
</dbReference>
<dbReference type="SUPFAM" id="SSF47954">
    <property type="entry name" value="Cyclin-like"/>
    <property type="match status" value="2"/>
</dbReference>
<name>CCT15_ARATH</name>